<name>OBG_LYSSC</name>
<gene>
    <name evidence="1" type="primary">obg</name>
    <name type="ordered locus">Bsph_3946</name>
</gene>
<comment type="function">
    <text evidence="1">An essential GTPase which binds GTP, GDP and possibly (p)ppGpp with moderate affinity, with high nucleotide exchange rates and a fairly low GTP hydrolysis rate. Plays a role in control of the cell cycle, stress response, ribosome biogenesis and in those bacteria that undergo differentiation, in morphogenesis control.</text>
</comment>
<comment type="cofactor">
    <cofactor evidence="1">
        <name>Mg(2+)</name>
        <dbReference type="ChEBI" id="CHEBI:18420"/>
    </cofactor>
</comment>
<comment type="subunit">
    <text evidence="1">Monomer.</text>
</comment>
<comment type="subcellular location">
    <subcellularLocation>
        <location evidence="1">Cytoplasm</location>
    </subcellularLocation>
</comment>
<comment type="similarity">
    <text evidence="1">Belongs to the TRAFAC class OBG-HflX-like GTPase superfamily. OBG GTPase family.</text>
</comment>
<comment type="sequence caution" evidence="5">
    <conflict type="frameshift">
        <sequence resource="EMBL-CDS" id="ACA41414"/>
    </conflict>
</comment>
<organism>
    <name type="scientific">Lysinibacillus sphaericus (strain C3-41)</name>
    <dbReference type="NCBI Taxonomy" id="444177"/>
    <lineage>
        <taxon>Bacteria</taxon>
        <taxon>Bacillati</taxon>
        <taxon>Bacillota</taxon>
        <taxon>Bacilli</taxon>
        <taxon>Bacillales</taxon>
        <taxon>Bacillaceae</taxon>
        <taxon>Lysinibacillus</taxon>
    </lineage>
</organism>
<keyword id="KW-0963">Cytoplasm</keyword>
<keyword id="KW-0342">GTP-binding</keyword>
<keyword id="KW-0378">Hydrolase</keyword>
<keyword id="KW-0460">Magnesium</keyword>
<keyword id="KW-0479">Metal-binding</keyword>
<keyword id="KW-0547">Nucleotide-binding</keyword>
<proteinExistence type="inferred from homology"/>
<dbReference type="EC" id="3.6.5.-" evidence="1"/>
<dbReference type="EMBL" id="CP000817">
    <property type="protein sequence ID" value="ACA41414.1"/>
    <property type="status" value="ALT_FRAME"/>
    <property type="molecule type" value="Genomic_DNA"/>
</dbReference>
<dbReference type="SMR" id="B1HVB2"/>
<dbReference type="EnsemblBacteria" id="ACA41414">
    <property type="protein sequence ID" value="ACA41414"/>
    <property type="gene ID" value="Bsph_3946"/>
</dbReference>
<dbReference type="KEGG" id="lsp:Bsph_3946"/>
<dbReference type="HOGENOM" id="CLU_011747_2_3_9"/>
<dbReference type="Proteomes" id="UP000002164">
    <property type="component" value="Chromosome"/>
</dbReference>
<dbReference type="GO" id="GO:0005737">
    <property type="term" value="C:cytoplasm"/>
    <property type="evidence" value="ECO:0007669"/>
    <property type="project" value="UniProtKB-SubCell"/>
</dbReference>
<dbReference type="GO" id="GO:0005525">
    <property type="term" value="F:GTP binding"/>
    <property type="evidence" value="ECO:0007669"/>
    <property type="project" value="UniProtKB-UniRule"/>
</dbReference>
<dbReference type="GO" id="GO:0003924">
    <property type="term" value="F:GTPase activity"/>
    <property type="evidence" value="ECO:0007669"/>
    <property type="project" value="UniProtKB-UniRule"/>
</dbReference>
<dbReference type="GO" id="GO:0000287">
    <property type="term" value="F:magnesium ion binding"/>
    <property type="evidence" value="ECO:0007669"/>
    <property type="project" value="InterPro"/>
</dbReference>
<dbReference type="GO" id="GO:0042254">
    <property type="term" value="P:ribosome biogenesis"/>
    <property type="evidence" value="ECO:0007669"/>
    <property type="project" value="UniProtKB-UniRule"/>
</dbReference>
<dbReference type="CDD" id="cd01898">
    <property type="entry name" value="Obg"/>
    <property type="match status" value="1"/>
</dbReference>
<dbReference type="FunFam" id="2.70.210.12:FF:000001">
    <property type="entry name" value="GTPase Obg"/>
    <property type="match status" value="1"/>
</dbReference>
<dbReference type="FunFam" id="3.40.50.300:FF:000515">
    <property type="entry name" value="GTPase Obg"/>
    <property type="match status" value="1"/>
</dbReference>
<dbReference type="Gene3D" id="3.30.300.350">
    <property type="entry name" value="GTP-binding protein OBG, C-terminal domain"/>
    <property type="match status" value="1"/>
</dbReference>
<dbReference type="Gene3D" id="2.70.210.12">
    <property type="entry name" value="GTP1/OBG domain"/>
    <property type="match status" value="1"/>
</dbReference>
<dbReference type="Gene3D" id="3.40.50.300">
    <property type="entry name" value="P-loop containing nucleotide triphosphate hydrolases"/>
    <property type="match status" value="1"/>
</dbReference>
<dbReference type="HAMAP" id="MF_01454">
    <property type="entry name" value="GTPase_Obg"/>
    <property type="match status" value="1"/>
</dbReference>
<dbReference type="InterPro" id="IPR031167">
    <property type="entry name" value="G_OBG"/>
</dbReference>
<dbReference type="InterPro" id="IPR006073">
    <property type="entry name" value="GTP-bd"/>
</dbReference>
<dbReference type="InterPro" id="IPR014100">
    <property type="entry name" value="GTP-bd_Obg/CgtA"/>
</dbReference>
<dbReference type="InterPro" id="IPR036346">
    <property type="entry name" value="GTP-bd_prot_GTP1/OBG_C_sf"/>
</dbReference>
<dbReference type="InterPro" id="IPR006074">
    <property type="entry name" value="GTP1-OBG_CS"/>
</dbReference>
<dbReference type="InterPro" id="IPR006169">
    <property type="entry name" value="GTP1_OBG_dom"/>
</dbReference>
<dbReference type="InterPro" id="IPR036726">
    <property type="entry name" value="GTP1_OBG_dom_sf"/>
</dbReference>
<dbReference type="InterPro" id="IPR045086">
    <property type="entry name" value="OBG_GTPase"/>
</dbReference>
<dbReference type="InterPro" id="IPR015349">
    <property type="entry name" value="OCT_dom"/>
</dbReference>
<dbReference type="InterPro" id="IPR027417">
    <property type="entry name" value="P-loop_NTPase"/>
</dbReference>
<dbReference type="InterPro" id="IPR005225">
    <property type="entry name" value="Small_GTP-bd"/>
</dbReference>
<dbReference type="NCBIfam" id="TIGR02729">
    <property type="entry name" value="Obg_CgtA"/>
    <property type="match status" value="1"/>
</dbReference>
<dbReference type="NCBIfam" id="TIGR03595">
    <property type="entry name" value="Obg_CgtA_exten"/>
    <property type="match status" value="1"/>
</dbReference>
<dbReference type="NCBIfam" id="NF008954">
    <property type="entry name" value="PRK12296.1"/>
    <property type="match status" value="1"/>
</dbReference>
<dbReference type="NCBIfam" id="NF008955">
    <property type="entry name" value="PRK12297.1"/>
    <property type="match status" value="1"/>
</dbReference>
<dbReference type="NCBIfam" id="NF008956">
    <property type="entry name" value="PRK12299.1"/>
    <property type="match status" value="1"/>
</dbReference>
<dbReference type="NCBIfam" id="TIGR00231">
    <property type="entry name" value="small_GTP"/>
    <property type="match status" value="1"/>
</dbReference>
<dbReference type="PANTHER" id="PTHR11702">
    <property type="entry name" value="DEVELOPMENTALLY REGULATED GTP-BINDING PROTEIN-RELATED"/>
    <property type="match status" value="1"/>
</dbReference>
<dbReference type="PANTHER" id="PTHR11702:SF31">
    <property type="entry name" value="MITOCHONDRIAL RIBOSOME-ASSOCIATED GTPASE 2"/>
    <property type="match status" value="1"/>
</dbReference>
<dbReference type="Pfam" id="PF09269">
    <property type="entry name" value="DUF1967"/>
    <property type="match status" value="1"/>
</dbReference>
<dbReference type="Pfam" id="PF01018">
    <property type="entry name" value="GTP1_OBG"/>
    <property type="match status" value="1"/>
</dbReference>
<dbReference type="Pfam" id="PF01926">
    <property type="entry name" value="MMR_HSR1"/>
    <property type="match status" value="1"/>
</dbReference>
<dbReference type="PIRSF" id="PIRSF002401">
    <property type="entry name" value="GTP_bd_Obg/CgtA"/>
    <property type="match status" value="1"/>
</dbReference>
<dbReference type="PRINTS" id="PR00326">
    <property type="entry name" value="GTP1OBG"/>
</dbReference>
<dbReference type="SUPFAM" id="SSF102741">
    <property type="entry name" value="Obg GTP-binding protein C-terminal domain"/>
    <property type="match status" value="1"/>
</dbReference>
<dbReference type="SUPFAM" id="SSF82051">
    <property type="entry name" value="Obg GTP-binding protein N-terminal domain"/>
    <property type="match status" value="1"/>
</dbReference>
<dbReference type="SUPFAM" id="SSF52540">
    <property type="entry name" value="P-loop containing nucleoside triphosphate hydrolases"/>
    <property type="match status" value="1"/>
</dbReference>
<dbReference type="PROSITE" id="PS51710">
    <property type="entry name" value="G_OBG"/>
    <property type="match status" value="1"/>
</dbReference>
<dbReference type="PROSITE" id="PS00905">
    <property type="entry name" value="GTP1_OBG"/>
    <property type="match status" value="1"/>
</dbReference>
<dbReference type="PROSITE" id="PS51883">
    <property type="entry name" value="OBG"/>
    <property type="match status" value="1"/>
</dbReference>
<dbReference type="PROSITE" id="PS51881">
    <property type="entry name" value="OCT"/>
    <property type="match status" value="1"/>
</dbReference>
<protein>
    <recommendedName>
        <fullName evidence="1">GTPase Obg</fullName>
        <ecNumber evidence="1">3.6.5.-</ecNumber>
    </recommendedName>
    <alternativeName>
        <fullName evidence="1">GTP-binding protein Obg</fullName>
    </alternativeName>
</protein>
<sequence>MFVDHVKIYVKGGDGGDGMVAFRREKYVPNGGPAGGDGGHGGNVVFEVEEGLRTLMDFRYKRHFKAPRGEHGMSKGMHGKNAEDLIVKVPPGTVVMNEETNAVIADLVEHGQRAVIAKAGRGGRGNSRFATPANPAPELSEKGEPGQELNVILELKVLADVGLVGFPSVGKSTLLSVVSAAKPKIGAYHFTTIVPNLGMIETDDHRSFAMADLPGLIEGAHEGVGLGHQFLRHIERTRVIVHVIDMSGMEGRDPYEDYLTINEELKQYNLRLTERPQIIVANKMDMPDAEENLTAFRQKVGEDVQIFPISAVSRQGLKELLFAIADLLEVTPEFPLYDEVEEQSDATVMYKHEAKGEDFEITRDDDGTFIISGYAIERLFKMTDFSREDGIRRFARQLRAMGVDEALRERGAQDGDTVRLQEFEFEFVD</sequence>
<feature type="chain" id="PRO_0000386027" description="GTPase Obg">
    <location>
        <begin position="1"/>
        <end position="429"/>
    </location>
</feature>
<feature type="domain" description="Obg" evidence="3">
    <location>
        <begin position="1"/>
        <end position="158"/>
    </location>
</feature>
<feature type="domain" description="OBG-type G" evidence="1">
    <location>
        <begin position="159"/>
        <end position="329"/>
    </location>
</feature>
<feature type="domain" description="OCT" evidence="2">
    <location>
        <begin position="351"/>
        <end position="429"/>
    </location>
</feature>
<feature type="region of interest" description="Disordered" evidence="4">
    <location>
        <begin position="119"/>
        <end position="143"/>
    </location>
</feature>
<feature type="binding site" evidence="1">
    <location>
        <begin position="165"/>
        <end position="172"/>
    </location>
    <ligand>
        <name>GTP</name>
        <dbReference type="ChEBI" id="CHEBI:37565"/>
    </ligand>
</feature>
<feature type="binding site" evidence="1">
    <location>
        <position position="172"/>
    </location>
    <ligand>
        <name>Mg(2+)</name>
        <dbReference type="ChEBI" id="CHEBI:18420"/>
    </ligand>
</feature>
<feature type="binding site" evidence="1">
    <location>
        <begin position="190"/>
        <end position="194"/>
    </location>
    <ligand>
        <name>GTP</name>
        <dbReference type="ChEBI" id="CHEBI:37565"/>
    </ligand>
</feature>
<feature type="binding site" evidence="1">
    <location>
        <position position="192"/>
    </location>
    <ligand>
        <name>Mg(2+)</name>
        <dbReference type="ChEBI" id="CHEBI:18420"/>
    </ligand>
</feature>
<feature type="binding site" evidence="1">
    <location>
        <begin position="212"/>
        <end position="215"/>
    </location>
    <ligand>
        <name>GTP</name>
        <dbReference type="ChEBI" id="CHEBI:37565"/>
    </ligand>
</feature>
<feature type="binding site" evidence="1">
    <location>
        <begin position="282"/>
        <end position="285"/>
    </location>
    <ligand>
        <name>GTP</name>
        <dbReference type="ChEBI" id="CHEBI:37565"/>
    </ligand>
</feature>
<feature type="binding site" evidence="1">
    <location>
        <begin position="310"/>
        <end position="312"/>
    </location>
    <ligand>
        <name>GTP</name>
        <dbReference type="ChEBI" id="CHEBI:37565"/>
    </ligand>
</feature>
<reference key="1">
    <citation type="journal article" date="2008" name="J. Bacteriol.">
        <title>Complete genome sequence of the mosquitocidal bacterium Bacillus sphaericus C3-41 and comparison with those of closely related Bacillus species.</title>
        <authorList>
            <person name="Hu X."/>
            <person name="Fan W."/>
            <person name="Han B."/>
            <person name="Liu H."/>
            <person name="Zheng D."/>
            <person name="Li Q."/>
            <person name="Dong W."/>
            <person name="Yan J."/>
            <person name="Gao M."/>
            <person name="Berry C."/>
            <person name="Yuan Z."/>
        </authorList>
    </citation>
    <scope>NUCLEOTIDE SEQUENCE [LARGE SCALE GENOMIC DNA]</scope>
    <source>
        <strain>C3-41</strain>
    </source>
</reference>
<evidence type="ECO:0000255" key="1">
    <source>
        <dbReference type="HAMAP-Rule" id="MF_01454"/>
    </source>
</evidence>
<evidence type="ECO:0000255" key="2">
    <source>
        <dbReference type="PROSITE-ProRule" id="PRU01229"/>
    </source>
</evidence>
<evidence type="ECO:0000255" key="3">
    <source>
        <dbReference type="PROSITE-ProRule" id="PRU01231"/>
    </source>
</evidence>
<evidence type="ECO:0000256" key="4">
    <source>
        <dbReference type="SAM" id="MobiDB-lite"/>
    </source>
</evidence>
<evidence type="ECO:0000305" key="5"/>
<accession>B1HVB2</accession>